<keyword id="KW-0072">Autophagy</keyword>
<keyword id="KW-0968">Cytoplasmic vesicle</keyword>
<keyword id="KW-0256">Endoplasmic reticulum</keyword>
<keyword id="KW-0333">Golgi apparatus</keyword>
<keyword id="KW-0445">Lipid transport</keyword>
<keyword id="KW-0472">Membrane</keyword>
<keyword id="KW-0597">Phosphoprotein</keyword>
<keyword id="KW-1185">Reference proteome</keyword>
<keyword id="KW-0812">Transmembrane</keyword>
<keyword id="KW-1133">Transmembrane helix</keyword>
<keyword id="KW-0813">Transport</keyword>
<gene>
    <name type="primary">ATG9</name>
    <name type="ordered locus">CAALFM_C305040CA</name>
    <name type="ORF">CaO19.13395</name>
    <name type="ORF">CaO19.5974</name>
</gene>
<protein>
    <recommendedName>
        <fullName>Autophagy-related protein 9</fullName>
    </recommendedName>
</protein>
<comment type="function">
    <text evidence="2 5">Phospholipid scramblase involved in autophagy and cytoplasm to vacuole transport (Cvt) vesicle formation (PubMed:17185534). Cycles between the preautophagosomal structure/phagophore assembly site (PAS) and the cytoplasmic vesicle pool and supplies membrane for the growing autophagosome. Lipid scramblase activity plays a key role in preautophagosomal structure/phagophore assembly by distributing the phospholipids that arrive through atg2 from the cytoplasmic to the luminal leaflet of the bilayer, thereby driving autophagosomal membrane expansion. Required for mitophagy. Also involved in endoplasmic reticulum-specific autophagic process and is essential for the survival of cells subjected to severe ER stress. Different machineries are required for anterograde trafficking to the PAS during either the Cvt pathway or bulk autophagy and for retrograde trafficking (By similarity).</text>
</comment>
<comment type="catalytic activity">
    <reaction evidence="2">
        <text>a 1,2-diacyl-sn-glycero-3-phosphocholine(in) = a 1,2-diacyl-sn-glycero-3-phosphocholine(out)</text>
        <dbReference type="Rhea" id="RHEA:38571"/>
        <dbReference type="ChEBI" id="CHEBI:57643"/>
    </reaction>
</comment>
<comment type="catalytic activity">
    <reaction evidence="2">
        <text>a 1,2-diacyl-sn-glycero-3-phospho-L-serine(in) = a 1,2-diacyl-sn-glycero-3-phospho-L-serine(out)</text>
        <dbReference type="Rhea" id="RHEA:38663"/>
        <dbReference type="ChEBI" id="CHEBI:57262"/>
    </reaction>
</comment>
<comment type="catalytic activity">
    <reaction evidence="2">
        <text>a 1,2-diacyl-sn-glycero-3-phosphoethanolamine(in) = a 1,2-diacyl-sn-glycero-3-phosphoethanolamine(out)</text>
        <dbReference type="Rhea" id="RHEA:38895"/>
        <dbReference type="ChEBI" id="CHEBI:64612"/>
    </reaction>
</comment>
<comment type="catalytic activity">
    <reaction evidence="2">
        <text>a 1,2-diacyl-sn-glycero-3-phospho-(1D-myo-inositol-3-phosphate)(in) = a 1,2-diacyl-sn-glycero-3-phospho-(1D-myo-inositol-3-phosphate)(out)</text>
        <dbReference type="Rhea" id="RHEA:67920"/>
        <dbReference type="ChEBI" id="CHEBI:58088"/>
    </reaction>
</comment>
<comment type="subunit">
    <text evidence="1">Homotrimer; forms a homotrimer with a central pore that forms a path between the two membrane leaflets.</text>
</comment>
<comment type="subcellular location">
    <subcellularLocation>
        <location evidence="2">Preautophagosomal structure membrane</location>
        <topology evidence="2">Multi-pass membrane protein</topology>
    </subcellularLocation>
    <subcellularLocation>
        <location evidence="2">Cytoplasmic vesicle membrane</location>
        <topology evidence="2">Multi-pass membrane protein</topology>
    </subcellularLocation>
    <subcellularLocation>
        <location evidence="2">Golgi apparatus membrane</location>
        <topology evidence="2">Multi-pass membrane protein</topology>
    </subcellularLocation>
    <subcellularLocation>
        <location evidence="2">Endoplasmic reticulum membrane</location>
        <topology evidence="2">Multi-pass membrane protein</topology>
    </subcellularLocation>
</comment>
<comment type="domain">
    <text evidence="1">Forms a homotrimer with a solvated central pore, which is connected laterally to the cytosol through the cavity within each protomer. Acts as a lipid scramblase that uses its central pore to function: the central pore opens laterally to accommodate lipid headgroups, thereby enabling lipid flipping and redistribution of lipids added to the outer leaflet of ATG9-containing vesicles, thereby enabling growth into autophagosomes.</text>
</comment>
<comment type="PTM">
    <text evidence="2">Phosphorylated by ATG1. ATG1 phosphorylation is required for preautophagosome elongation.</text>
</comment>
<comment type="similarity">
    <text evidence="6">Belongs to the ATG9 family.</text>
</comment>
<dbReference type="EMBL" id="CP017625">
    <property type="protein sequence ID" value="AOW28519.1"/>
    <property type="molecule type" value="Genomic_DNA"/>
</dbReference>
<dbReference type="RefSeq" id="XP_723185.1">
    <property type="nucleotide sequence ID" value="XM_718092.1"/>
</dbReference>
<dbReference type="SMR" id="Q5ANC9"/>
<dbReference type="BioGRID" id="1218333">
    <property type="interactions" value="1"/>
</dbReference>
<dbReference type="FunCoup" id="Q5ANC9">
    <property type="interactions" value="250"/>
</dbReference>
<dbReference type="STRING" id="237561.Q5ANC9"/>
<dbReference type="TCDB" id="9.A.15.1.1">
    <property type="family name" value="the autophagy-related phagophore-formation transporter (apt) family"/>
</dbReference>
<dbReference type="EnsemblFungi" id="C3_05040C_A-T">
    <property type="protein sequence ID" value="C3_05040C_A-T-p1"/>
    <property type="gene ID" value="C3_05040C_A"/>
</dbReference>
<dbReference type="GeneID" id="3635239"/>
<dbReference type="KEGG" id="cal:CAALFM_C305040CA"/>
<dbReference type="CGD" id="CAL0000185873">
    <property type="gene designation" value="ATG9"/>
</dbReference>
<dbReference type="VEuPathDB" id="FungiDB:C3_05040C_A"/>
<dbReference type="eggNOG" id="KOG2173">
    <property type="taxonomic scope" value="Eukaryota"/>
</dbReference>
<dbReference type="HOGENOM" id="CLU_006200_1_0_1"/>
<dbReference type="InParanoid" id="Q5ANC9"/>
<dbReference type="OMA" id="ELMTISW"/>
<dbReference type="OrthoDB" id="2020634at2759"/>
<dbReference type="PRO" id="PR:Q5ANC9"/>
<dbReference type="Proteomes" id="UP000000559">
    <property type="component" value="Chromosome 3"/>
</dbReference>
<dbReference type="GO" id="GO:0005776">
    <property type="term" value="C:autophagosome"/>
    <property type="evidence" value="ECO:0000318"/>
    <property type="project" value="GO_Central"/>
</dbReference>
<dbReference type="GO" id="GO:0030659">
    <property type="term" value="C:cytoplasmic vesicle membrane"/>
    <property type="evidence" value="ECO:0007669"/>
    <property type="project" value="UniProtKB-SubCell"/>
</dbReference>
<dbReference type="GO" id="GO:0005789">
    <property type="term" value="C:endoplasmic reticulum membrane"/>
    <property type="evidence" value="ECO:0007669"/>
    <property type="project" value="UniProtKB-SubCell"/>
</dbReference>
<dbReference type="GO" id="GO:0000139">
    <property type="term" value="C:Golgi membrane"/>
    <property type="evidence" value="ECO:0007669"/>
    <property type="project" value="UniProtKB-SubCell"/>
</dbReference>
<dbReference type="GO" id="GO:0016020">
    <property type="term" value="C:membrane"/>
    <property type="evidence" value="ECO:0000250"/>
    <property type="project" value="CGD"/>
</dbReference>
<dbReference type="GO" id="GO:0000407">
    <property type="term" value="C:phagophore assembly site"/>
    <property type="evidence" value="ECO:0000318"/>
    <property type="project" value="GO_Central"/>
</dbReference>
<dbReference type="GO" id="GO:0034045">
    <property type="term" value="C:phagophore assembly site membrane"/>
    <property type="evidence" value="ECO:0007669"/>
    <property type="project" value="UniProtKB-SubCell"/>
</dbReference>
<dbReference type="GO" id="GO:0006914">
    <property type="term" value="P:autophagy"/>
    <property type="evidence" value="ECO:0000315"/>
    <property type="project" value="CGD"/>
</dbReference>
<dbReference type="GO" id="GO:0032258">
    <property type="term" value="P:cytoplasm to vacuole targeting by the Cvt pathway"/>
    <property type="evidence" value="ECO:0000315"/>
    <property type="project" value="CGD"/>
</dbReference>
<dbReference type="GO" id="GO:0006869">
    <property type="term" value="P:lipid transport"/>
    <property type="evidence" value="ECO:0007669"/>
    <property type="project" value="UniProtKB-KW"/>
</dbReference>
<dbReference type="GO" id="GO:0000423">
    <property type="term" value="P:mitophagy"/>
    <property type="evidence" value="ECO:0000318"/>
    <property type="project" value="GO_Central"/>
</dbReference>
<dbReference type="GO" id="GO:0034727">
    <property type="term" value="P:piecemeal microautophagy of the nucleus"/>
    <property type="evidence" value="ECO:0000318"/>
    <property type="project" value="GO_Central"/>
</dbReference>
<dbReference type="GO" id="GO:0034497">
    <property type="term" value="P:protein localization to phagophore assembly site"/>
    <property type="evidence" value="ECO:0000318"/>
    <property type="project" value="GO_Central"/>
</dbReference>
<dbReference type="GO" id="GO:0061709">
    <property type="term" value="P:reticulophagy"/>
    <property type="evidence" value="ECO:0000318"/>
    <property type="project" value="GO_Central"/>
</dbReference>
<dbReference type="InterPro" id="IPR007241">
    <property type="entry name" value="Autophagy-rel_prot_9"/>
</dbReference>
<dbReference type="PANTHER" id="PTHR13038">
    <property type="entry name" value="APG9 AUTOPHAGY 9"/>
    <property type="match status" value="1"/>
</dbReference>
<dbReference type="PANTHER" id="PTHR13038:SF10">
    <property type="entry name" value="AUTOPHAGY-RELATED PROTEIN 9"/>
    <property type="match status" value="1"/>
</dbReference>
<dbReference type="Pfam" id="PF04109">
    <property type="entry name" value="ATG9"/>
    <property type="match status" value="1"/>
</dbReference>
<reference key="1">
    <citation type="journal article" date="2004" name="Proc. Natl. Acad. Sci. U.S.A.">
        <title>The diploid genome sequence of Candida albicans.</title>
        <authorList>
            <person name="Jones T."/>
            <person name="Federspiel N.A."/>
            <person name="Chibana H."/>
            <person name="Dungan J."/>
            <person name="Kalman S."/>
            <person name="Magee B.B."/>
            <person name="Newport G."/>
            <person name="Thorstenson Y.R."/>
            <person name="Agabian N."/>
            <person name="Magee P.T."/>
            <person name="Davis R.W."/>
            <person name="Scherer S."/>
        </authorList>
    </citation>
    <scope>NUCLEOTIDE SEQUENCE [LARGE SCALE GENOMIC DNA]</scope>
    <source>
        <strain>SC5314 / ATCC MYA-2876</strain>
    </source>
</reference>
<reference key="2">
    <citation type="journal article" date="2007" name="Genome Biol.">
        <title>Assembly of the Candida albicans genome into sixteen supercontigs aligned on the eight chromosomes.</title>
        <authorList>
            <person name="van het Hoog M."/>
            <person name="Rast T.J."/>
            <person name="Martchenko M."/>
            <person name="Grindle S."/>
            <person name="Dignard D."/>
            <person name="Hogues H."/>
            <person name="Cuomo C."/>
            <person name="Berriman M."/>
            <person name="Scherer S."/>
            <person name="Magee B.B."/>
            <person name="Whiteway M."/>
            <person name="Chibana H."/>
            <person name="Nantel A."/>
            <person name="Magee P.T."/>
        </authorList>
    </citation>
    <scope>GENOME REANNOTATION</scope>
    <source>
        <strain>SC5314 / ATCC MYA-2876</strain>
    </source>
</reference>
<reference key="3">
    <citation type="journal article" date="2013" name="Genome Biol.">
        <title>Assembly of a phased diploid Candida albicans genome facilitates allele-specific measurements and provides a simple model for repeat and indel structure.</title>
        <authorList>
            <person name="Muzzey D."/>
            <person name="Schwartz K."/>
            <person name="Weissman J.S."/>
            <person name="Sherlock G."/>
        </authorList>
    </citation>
    <scope>NUCLEOTIDE SEQUENCE [LARGE SCALE GENOMIC DNA]</scope>
    <scope>GENOME REANNOTATION</scope>
    <source>
        <strain>SC5314 / ATCC MYA-2876</strain>
    </source>
</reference>
<reference key="4">
    <citation type="journal article" date="2007" name="Microbiology">
        <title>Autophagy in the pathogen Candida albicans.</title>
        <authorList>
            <person name="Palmer G.E."/>
            <person name="Kelly M.N."/>
            <person name="Sturtevant J.E."/>
        </authorList>
    </citation>
    <scope>FUNCTION</scope>
</reference>
<evidence type="ECO:0000250" key="1">
    <source>
        <dbReference type="UniProtKB" id="O74312"/>
    </source>
</evidence>
<evidence type="ECO:0000250" key="2">
    <source>
        <dbReference type="UniProtKB" id="Q12142"/>
    </source>
</evidence>
<evidence type="ECO:0000255" key="3"/>
<evidence type="ECO:0000256" key="4">
    <source>
        <dbReference type="SAM" id="MobiDB-lite"/>
    </source>
</evidence>
<evidence type="ECO:0000269" key="5">
    <source>
    </source>
</evidence>
<evidence type="ECO:0000305" key="6"/>
<name>ATG9_CANAL</name>
<feature type="chain" id="PRO_0000119826" description="Autophagy-related protein 9">
    <location>
        <begin position="1"/>
        <end position="952"/>
    </location>
</feature>
<feature type="topological domain" description="Cytoplasmic" evidence="6">
    <location>
        <begin position="1"/>
        <end position="260"/>
    </location>
</feature>
<feature type="transmembrane region" description="Helical" evidence="3">
    <location>
        <begin position="261"/>
        <end position="281"/>
    </location>
</feature>
<feature type="topological domain" description="Lumenal" evidence="6">
    <location>
        <begin position="282"/>
        <end position="308"/>
    </location>
</feature>
<feature type="transmembrane region" description="Helical" evidence="3">
    <location>
        <begin position="309"/>
        <end position="329"/>
    </location>
</feature>
<feature type="topological domain" description="Cytoplasmic" evidence="6">
    <location>
        <begin position="330"/>
        <end position="490"/>
    </location>
</feature>
<feature type="intramembrane region" evidence="1">
    <location>
        <begin position="491"/>
        <end position="511"/>
    </location>
</feature>
<feature type="topological domain" description="Cytoplasmic" evidence="6">
    <location>
        <begin position="512"/>
        <end position="577"/>
    </location>
</feature>
<feature type="transmembrane region" description="Helical" evidence="3">
    <location>
        <begin position="578"/>
        <end position="598"/>
    </location>
</feature>
<feature type="topological domain" description="Lumenal" evidence="6">
    <location>
        <begin position="599"/>
        <end position="614"/>
    </location>
</feature>
<feature type="transmembrane region" description="Helical" evidence="3">
    <location>
        <begin position="615"/>
        <end position="635"/>
    </location>
</feature>
<feature type="topological domain" description="Cytoplasmic" evidence="6">
    <location>
        <begin position="636"/>
        <end position="702"/>
    </location>
</feature>
<feature type="intramembrane region" evidence="1">
    <location>
        <begin position="703"/>
        <end position="723"/>
    </location>
</feature>
<feature type="topological domain" description="Cytoplasmic" evidence="6">
    <location>
        <begin position="724"/>
        <end position="952"/>
    </location>
</feature>
<feature type="region of interest" description="Disordered" evidence="4">
    <location>
        <begin position="1"/>
        <end position="33"/>
    </location>
</feature>
<feature type="region of interest" description="Disordered" evidence="4">
    <location>
        <begin position="69"/>
        <end position="159"/>
    </location>
</feature>
<feature type="region of interest" description="Disordered" evidence="4">
    <location>
        <begin position="806"/>
        <end position="832"/>
    </location>
</feature>
<feature type="region of interest" description="Disordered" evidence="4">
    <location>
        <begin position="855"/>
        <end position="889"/>
    </location>
</feature>
<feature type="compositionally biased region" description="Low complexity" evidence="4">
    <location>
        <begin position="115"/>
        <end position="133"/>
    </location>
</feature>
<feature type="compositionally biased region" description="Polar residues" evidence="4">
    <location>
        <begin position="142"/>
        <end position="159"/>
    </location>
</feature>
<feature type="compositionally biased region" description="Basic and acidic residues" evidence="4">
    <location>
        <begin position="806"/>
        <end position="818"/>
    </location>
</feature>
<feature type="compositionally biased region" description="Acidic residues" evidence="4">
    <location>
        <begin position="819"/>
        <end position="832"/>
    </location>
</feature>
<feature type="compositionally biased region" description="Low complexity" evidence="4">
    <location>
        <begin position="867"/>
        <end position="877"/>
    </location>
</feature>
<sequence>MSSSSYNPYKNNVNDRLINNSTDSFQDNDQGIPNNNDTFLSRIFGLNSIYNQLQDNYQYYDPEFDSSLNQQLQQSIQENDEAEDESLLPQHQQQQQQAAPMDLSIQDKSAKQKSKSSSLLNSDSDSDLSSSEDSYVRPNIPQIPSTPIETENQGSSSKIKFSIPQRAKNFVGKLHPHHEPTLPVYQTPQEFRRNLPQQQRASATVNTNYQRTRNNNRRFIIPPKERALYLWANITNMDEFLSDVYYYYRGRGLLNIVLSRGFDLIILIFILIFTVFLKWGIDYSIFFDNLHQEESKHITLNDMIIPNYFATIPLSIKFILFGFSVYILLRSVQLYLDYNYKLKELKNFYHYLLDVTDDELMTISWKTIVEKLMLLKDYNSLTSTTKSNNFSENHYVNDLSSKVRLNAHDIANRIMRRENYMIALINKDILDLSVLFMNEKSLLTKTLEWNLKLCIDNFIYNQQGQINGKILKEYNRNQLARELTSRFKLAAIINLILSPFIVIYFVLLYFFRYFNEYKSNPASILGLRQYTPYAEWKLREYNELSHLFNKRLIMSMGPANTYIDQFPKGFLVVNLMRLINFISGSILAVLVIMGILLEDENHSFWSFEITDGRSALFYISIFGTIWAITASSATGTSHESTISTTSQSSNSNSNSNAASTFVYDPEASLRYVAQFTHYLPSSWNKKLHTIQVKNEFCQLYCLKIIIIINEILSSVLTPFILWFKISHNSGNIIDFYREYSIHVDGLGYVCYFAMFNFEEKDKNMMSDLNKSKKRRKRMKNKMNKYGKTKMVNPISGKTVNSEIEMTKISKSESERSSDDESGNEQDYDNDEELDYLSYKKDDKMIKSYMYFLESYGGSKQPQPQPPQQQQHPQNQNQTVGGLRNRNPIQSIDPAIMTGNYYDQQSLNSSIYNINYKFDDSGLLQDETMNSSSRKKGGVLGMLNQFYKQDINR</sequence>
<accession>Q5ANC9</accession>
<accession>A0A1D8PK44</accession>
<proteinExistence type="inferred from homology"/>
<organism>
    <name type="scientific">Candida albicans (strain SC5314 / ATCC MYA-2876)</name>
    <name type="common">Yeast</name>
    <dbReference type="NCBI Taxonomy" id="237561"/>
    <lineage>
        <taxon>Eukaryota</taxon>
        <taxon>Fungi</taxon>
        <taxon>Dikarya</taxon>
        <taxon>Ascomycota</taxon>
        <taxon>Saccharomycotina</taxon>
        <taxon>Pichiomycetes</taxon>
        <taxon>Debaryomycetaceae</taxon>
        <taxon>Candida/Lodderomyces clade</taxon>
        <taxon>Candida</taxon>
    </lineage>
</organism>